<evidence type="ECO:0000255" key="1">
    <source>
        <dbReference type="PROSITE-ProRule" id="PRU00558"/>
    </source>
</evidence>
<evidence type="ECO:0000269" key="2">
    <source ref="2"/>
</evidence>
<evidence type="ECO:0000305" key="3"/>
<comment type="function">
    <text evidence="2">Inhibits the growth of the fungus P.tritici-repentis.</text>
</comment>
<protein>
    <recommendedName>
        <fullName>Putative fungistatic metabolite</fullName>
    </recommendedName>
</protein>
<accession>P84675</accession>
<accession>Q2H7A2</accession>
<reference key="1">
    <citation type="journal article" date="2015" name="Genome Announc.">
        <title>Draft genome sequence of the cellulolytic fungus Chaetomium globosum.</title>
        <authorList>
            <person name="Cuomo C.A."/>
            <person name="Untereiner W.A."/>
            <person name="Ma L.-J."/>
            <person name="Grabherr M."/>
            <person name="Birren B.W."/>
        </authorList>
    </citation>
    <scope>NUCLEOTIDE SEQUENCE [LARGE SCALE GENOMIC DNA]</scope>
    <source>
        <strain>ATCC 6205 / CBS 148.51 / DSM 1962 / NBRC 6347 / NRRL 1970</strain>
    </source>
</reference>
<reference evidence="3" key="2">
    <citation type="thesis" date="2005" institute="University of Sydney" country="Australia">
        <title>The endophyte Chaetomium interacts with the pathogen Pyrenophora tritici-repentis (Dried.) Drechs. in wheat.</title>
        <authorList>
            <person name="Istifadah N."/>
        </authorList>
    </citation>
    <scope>PROTEIN SEQUENCE OF 19-30; 130-140 AND 149-165</scope>
    <scope>FUNCTION</scope>
</reference>
<keyword id="KW-0929">Antimicrobial</keyword>
<keyword id="KW-0903">Direct protein sequencing</keyword>
<keyword id="KW-0295">Fungicide</keyword>
<keyword id="KW-1185">Reference proteome</keyword>
<keyword id="KW-0677">Repeat</keyword>
<feature type="chain" id="PRO_0000058345" description="Putative fungistatic metabolite">
    <location>
        <begin position="1"/>
        <end position="222"/>
    </location>
</feature>
<feature type="domain" description="WSC 1" evidence="1">
    <location>
        <begin position="16"/>
        <end position="110"/>
    </location>
</feature>
<feature type="domain" description="WSC 2" evidence="1">
    <location>
        <begin position="127"/>
        <end position="222"/>
    </location>
</feature>
<feature type="sequence conflict" description="In Ref. 2; AA sequence." evidence="3" ref="2">
    <original>I</original>
    <variation>L</variation>
    <location>
        <position position="26"/>
    </location>
</feature>
<feature type="sequence conflict" description="In Ref. 2; AA sequence." evidence="3" ref="2">
    <original>G</original>
    <variation>A</variation>
    <location>
        <position position="132"/>
    </location>
</feature>
<feature type="sequence conflict" description="In Ref. 2; AA sequence." evidence="3" ref="2">
    <original>G</original>
    <variation>R</variation>
    <location>
        <position position="140"/>
    </location>
</feature>
<feature type="sequence conflict" description="In Ref. 2; AA sequence." evidence="3" ref="2">
    <location>
        <position position="151"/>
    </location>
</feature>
<organism>
    <name type="scientific">Chaetomium globosum (strain ATCC 6205 / CBS 148.51 / DSM 1962 / NBRC 6347 / NRRL 1970)</name>
    <name type="common">Soil fungus</name>
    <dbReference type="NCBI Taxonomy" id="306901"/>
    <lineage>
        <taxon>Eukaryota</taxon>
        <taxon>Fungi</taxon>
        <taxon>Dikarya</taxon>
        <taxon>Ascomycota</taxon>
        <taxon>Pezizomycotina</taxon>
        <taxon>Sordariomycetes</taxon>
        <taxon>Sordariomycetidae</taxon>
        <taxon>Sordariales</taxon>
        <taxon>Chaetomiaceae</taxon>
        <taxon>Chaetomium</taxon>
    </lineage>
</organism>
<dbReference type="EMBL" id="CH408031">
    <property type="protein sequence ID" value="EAQ88844.1"/>
    <property type="molecule type" value="Genomic_DNA"/>
</dbReference>
<dbReference type="RefSeq" id="XP_001221558.1">
    <property type="nucleotide sequence ID" value="XM_001221557.1"/>
</dbReference>
<dbReference type="SMR" id="P84675"/>
<dbReference type="GeneID" id="4391031"/>
<dbReference type="VEuPathDB" id="FungiDB:CHGG_05463"/>
<dbReference type="eggNOG" id="KOG4157">
    <property type="taxonomic scope" value="Eukaryota"/>
</dbReference>
<dbReference type="HOGENOM" id="CLU_063916_3_1_1"/>
<dbReference type="InParanoid" id="P84675"/>
<dbReference type="OMA" id="CHCGTGL"/>
<dbReference type="OrthoDB" id="5985073at2759"/>
<dbReference type="Proteomes" id="UP000001056">
    <property type="component" value="Unassembled WGS sequence"/>
</dbReference>
<dbReference type="GO" id="GO:0050832">
    <property type="term" value="P:defense response to fungus"/>
    <property type="evidence" value="ECO:0007669"/>
    <property type="project" value="UniProtKB-KW"/>
</dbReference>
<dbReference type="GO" id="GO:0031640">
    <property type="term" value="P:killing of cells of another organism"/>
    <property type="evidence" value="ECO:0007669"/>
    <property type="project" value="UniProtKB-KW"/>
</dbReference>
<dbReference type="InterPro" id="IPR051589">
    <property type="entry name" value="Sialate-O-sulfotransferase"/>
</dbReference>
<dbReference type="InterPro" id="IPR002889">
    <property type="entry name" value="WSC_carb-bd"/>
</dbReference>
<dbReference type="PANTHER" id="PTHR45964">
    <property type="entry name" value="WSCD FAMILY MEMBER CG9164"/>
    <property type="match status" value="1"/>
</dbReference>
<dbReference type="PANTHER" id="PTHR45964:SF5">
    <property type="entry name" value="WSCD FAMILY MEMBER CG9164"/>
    <property type="match status" value="1"/>
</dbReference>
<dbReference type="Pfam" id="PF01822">
    <property type="entry name" value="WSC"/>
    <property type="match status" value="2"/>
</dbReference>
<dbReference type="SMART" id="SM00321">
    <property type="entry name" value="WSC"/>
    <property type="match status" value="2"/>
</dbReference>
<dbReference type="PROSITE" id="PS51212">
    <property type="entry name" value="WSC"/>
    <property type="match status" value="2"/>
</dbReference>
<name>PFM_CHAGB</name>
<gene>
    <name type="ORF">CHGG_05463</name>
</gene>
<sequence>MQSVLVLAAIVPAALAQTYYGCYTEIPTRALTGAVPLIDYEAMTLADCEAHCTGFDLWGLEYGGECYCGNSLAQGSFPAFSTDCTMPCPGDATLTSVCGGPNRLSLYGTSETAPESLPYPHDPPVTTTQYEGCYTEVTEGARALAGASGFSLTDMTVGGCGGYCRDSGFTWFGLEYSAECYCGSELSVNSTLAAEEDCAMPCSGAAGEVCGGSNRLSVYQWV</sequence>
<proteinExistence type="evidence at protein level"/>